<keyword id="KW-0067">ATP-binding</keyword>
<keyword id="KW-0997">Cell inner membrane</keyword>
<keyword id="KW-1003">Cell membrane</keyword>
<keyword id="KW-0472">Membrane</keyword>
<keyword id="KW-0547">Nucleotide-binding</keyword>
<keyword id="KW-1185">Reference proteome</keyword>
<keyword id="KW-0762">Sugar transport</keyword>
<keyword id="KW-1278">Translocase</keyword>
<keyword id="KW-0813">Transport</keyword>
<name>UGPC_RHOP2</name>
<reference key="1">
    <citation type="submission" date="2006-01" db="EMBL/GenBank/DDBJ databases">
        <title>Complete sequence of Rhodopseudomonas palustris HaA2.</title>
        <authorList>
            <consortium name="US DOE Joint Genome Institute"/>
            <person name="Copeland A."/>
            <person name="Lucas S."/>
            <person name="Lapidus A."/>
            <person name="Barry K."/>
            <person name="Detter J.C."/>
            <person name="Glavina T."/>
            <person name="Hammon N."/>
            <person name="Israni S."/>
            <person name="Pitluck S."/>
            <person name="Chain P."/>
            <person name="Malfatti S."/>
            <person name="Shin M."/>
            <person name="Vergez L."/>
            <person name="Schmutz J."/>
            <person name="Larimer F."/>
            <person name="Land M."/>
            <person name="Hauser L."/>
            <person name="Pelletier D.A."/>
            <person name="Kyrpides N."/>
            <person name="Anderson I."/>
            <person name="Oda Y."/>
            <person name="Harwood C.S."/>
            <person name="Richardson P."/>
        </authorList>
    </citation>
    <scope>NUCLEOTIDE SEQUENCE [LARGE SCALE GENOMIC DNA]</scope>
    <source>
        <strain>HaA2</strain>
    </source>
</reference>
<feature type="chain" id="PRO_0000289776" description="sn-glycerol-3-phosphate import ATP-binding protein UgpC">
    <location>
        <begin position="1"/>
        <end position="364"/>
    </location>
</feature>
<feature type="domain" description="ABC transporter" evidence="1">
    <location>
        <begin position="4"/>
        <end position="235"/>
    </location>
</feature>
<feature type="binding site" evidence="1">
    <location>
        <begin position="37"/>
        <end position="44"/>
    </location>
    <ligand>
        <name>ATP</name>
        <dbReference type="ChEBI" id="CHEBI:30616"/>
    </ligand>
</feature>
<protein>
    <recommendedName>
        <fullName evidence="1">sn-glycerol-3-phosphate import ATP-binding protein UgpC</fullName>
        <ecNumber evidence="1">7.6.2.10</ecNumber>
    </recommendedName>
</protein>
<evidence type="ECO:0000255" key="1">
    <source>
        <dbReference type="HAMAP-Rule" id="MF_01727"/>
    </source>
</evidence>
<comment type="function">
    <text evidence="1">Part of the ABC transporter complex UgpBAEC involved in sn-glycerol-3-phosphate (G3P) import. Responsible for energy coupling to the transport system.</text>
</comment>
<comment type="catalytic activity">
    <reaction evidence="1">
        <text>sn-glycerol 3-phosphate(out) + ATP + H2O = sn-glycerol 3-phosphate(in) + ADP + phosphate + H(+)</text>
        <dbReference type="Rhea" id="RHEA:21668"/>
        <dbReference type="ChEBI" id="CHEBI:15377"/>
        <dbReference type="ChEBI" id="CHEBI:15378"/>
        <dbReference type="ChEBI" id="CHEBI:30616"/>
        <dbReference type="ChEBI" id="CHEBI:43474"/>
        <dbReference type="ChEBI" id="CHEBI:57597"/>
        <dbReference type="ChEBI" id="CHEBI:456216"/>
        <dbReference type="EC" id="7.6.2.10"/>
    </reaction>
</comment>
<comment type="subunit">
    <text evidence="1">The complex is composed of two ATP-binding proteins (UgpC), two transmembrane proteins (UgpA and UgpE) and a solute-binding protein (UgpB).</text>
</comment>
<comment type="subcellular location">
    <subcellularLocation>
        <location evidence="1">Cell inner membrane</location>
        <topology evidence="1">Peripheral membrane protein</topology>
    </subcellularLocation>
</comment>
<comment type="similarity">
    <text evidence="1">Belongs to the ABC transporter superfamily. sn-glycerol-3-phosphate importer (TC 3.A.1.1.3) family.</text>
</comment>
<organism>
    <name type="scientific">Rhodopseudomonas palustris (strain HaA2)</name>
    <dbReference type="NCBI Taxonomy" id="316058"/>
    <lineage>
        <taxon>Bacteria</taxon>
        <taxon>Pseudomonadati</taxon>
        <taxon>Pseudomonadota</taxon>
        <taxon>Alphaproteobacteria</taxon>
        <taxon>Hyphomicrobiales</taxon>
        <taxon>Nitrobacteraceae</taxon>
        <taxon>Rhodopseudomonas</taxon>
    </lineage>
</organism>
<sequence length="364" mass="39525">MANVVLRNVRKTYPGGFEAIKGVDFEVGDGQFCVLVGPSGCGKSTLLRMVAGLETITAGEIDIGGRIVNQIEPADRDIAMVFQNYALYPHMSVYNNMAYGLRNRGMPKPEIDARVQEAARILEIGTMLDRKPRQLSGGQRQRVAMGRAIVRQPKVFLFDEPLSNLDAKLRVAMRVEIRKLQRRLGTTAIYVTHDQLEAMTLADILVVMNAGVVEQIGSPLEVYARPATTFVASFIGAPPMNLMLLDAEGVRARFGNAATGAGILGVRPEDLVISREPAATDGLSLDLTVEAIERVGPETFIYGTRSRAGDPTAVSSKPGELPPDDIIVRVPGQDAPAIGDHMFATALPQHLHLFSADGRRRIEL</sequence>
<accession>Q2J2E9</accession>
<dbReference type="EC" id="7.6.2.10" evidence="1"/>
<dbReference type="EMBL" id="CP000250">
    <property type="protein sequence ID" value="ABD05361.1"/>
    <property type="molecule type" value="Genomic_DNA"/>
</dbReference>
<dbReference type="RefSeq" id="WP_011439551.1">
    <property type="nucleotide sequence ID" value="NC_007778.1"/>
</dbReference>
<dbReference type="SMR" id="Q2J2E9"/>
<dbReference type="STRING" id="316058.RPB_0650"/>
<dbReference type="KEGG" id="rpb:RPB_0650"/>
<dbReference type="eggNOG" id="COG3842">
    <property type="taxonomic scope" value="Bacteria"/>
</dbReference>
<dbReference type="HOGENOM" id="CLU_000604_1_1_5"/>
<dbReference type="OrthoDB" id="8134152at2"/>
<dbReference type="Proteomes" id="UP000008809">
    <property type="component" value="Chromosome"/>
</dbReference>
<dbReference type="GO" id="GO:0055052">
    <property type="term" value="C:ATP-binding cassette (ABC) transporter complex, substrate-binding subunit-containing"/>
    <property type="evidence" value="ECO:0007669"/>
    <property type="project" value="TreeGrafter"/>
</dbReference>
<dbReference type="GO" id="GO:0015430">
    <property type="term" value="F:ABC-type glycerol-3-phosphate transporter activity"/>
    <property type="evidence" value="ECO:0007669"/>
    <property type="project" value="UniProtKB-EC"/>
</dbReference>
<dbReference type="GO" id="GO:0005524">
    <property type="term" value="F:ATP binding"/>
    <property type="evidence" value="ECO:0007669"/>
    <property type="project" value="UniProtKB-KW"/>
</dbReference>
<dbReference type="GO" id="GO:0016887">
    <property type="term" value="F:ATP hydrolysis activity"/>
    <property type="evidence" value="ECO:0007669"/>
    <property type="project" value="InterPro"/>
</dbReference>
<dbReference type="GO" id="GO:0008643">
    <property type="term" value="P:carbohydrate transport"/>
    <property type="evidence" value="ECO:0007669"/>
    <property type="project" value="InterPro"/>
</dbReference>
<dbReference type="GO" id="GO:0001407">
    <property type="term" value="P:glycerophosphodiester transmembrane transport"/>
    <property type="evidence" value="ECO:0007669"/>
    <property type="project" value="TreeGrafter"/>
</dbReference>
<dbReference type="CDD" id="cd03301">
    <property type="entry name" value="ABC_MalK_N"/>
    <property type="match status" value="1"/>
</dbReference>
<dbReference type="FunFam" id="3.40.50.300:FF:000042">
    <property type="entry name" value="Maltose/maltodextrin ABC transporter, ATP-binding protein"/>
    <property type="match status" value="1"/>
</dbReference>
<dbReference type="Gene3D" id="2.40.50.100">
    <property type="match status" value="1"/>
</dbReference>
<dbReference type="Gene3D" id="3.40.50.300">
    <property type="entry name" value="P-loop containing nucleotide triphosphate hydrolases"/>
    <property type="match status" value="1"/>
</dbReference>
<dbReference type="InterPro" id="IPR003593">
    <property type="entry name" value="AAA+_ATPase"/>
</dbReference>
<dbReference type="InterPro" id="IPR003439">
    <property type="entry name" value="ABC_transporter-like_ATP-bd"/>
</dbReference>
<dbReference type="InterPro" id="IPR017871">
    <property type="entry name" value="ABC_transporter-like_CS"/>
</dbReference>
<dbReference type="InterPro" id="IPR015855">
    <property type="entry name" value="ABC_transpr_MalK-like"/>
</dbReference>
<dbReference type="InterPro" id="IPR047641">
    <property type="entry name" value="ABC_transpr_MalK/UgpC-like"/>
</dbReference>
<dbReference type="InterPro" id="IPR008995">
    <property type="entry name" value="Mo/tungstate-bd_C_term_dom"/>
</dbReference>
<dbReference type="InterPro" id="IPR027417">
    <property type="entry name" value="P-loop_NTPase"/>
</dbReference>
<dbReference type="NCBIfam" id="NF008653">
    <property type="entry name" value="PRK11650.1"/>
    <property type="match status" value="1"/>
</dbReference>
<dbReference type="PANTHER" id="PTHR43875">
    <property type="entry name" value="MALTODEXTRIN IMPORT ATP-BINDING PROTEIN MSMX"/>
    <property type="match status" value="1"/>
</dbReference>
<dbReference type="PANTHER" id="PTHR43875:SF12">
    <property type="entry name" value="SN-GLYCEROL-3-PHOSPHATE IMPORT ATP-BINDING PROTEIN UGPC"/>
    <property type="match status" value="1"/>
</dbReference>
<dbReference type="Pfam" id="PF00005">
    <property type="entry name" value="ABC_tran"/>
    <property type="match status" value="1"/>
</dbReference>
<dbReference type="SMART" id="SM00382">
    <property type="entry name" value="AAA"/>
    <property type="match status" value="1"/>
</dbReference>
<dbReference type="SUPFAM" id="SSF50331">
    <property type="entry name" value="MOP-like"/>
    <property type="match status" value="1"/>
</dbReference>
<dbReference type="SUPFAM" id="SSF52540">
    <property type="entry name" value="P-loop containing nucleoside triphosphate hydrolases"/>
    <property type="match status" value="1"/>
</dbReference>
<dbReference type="PROSITE" id="PS00211">
    <property type="entry name" value="ABC_TRANSPORTER_1"/>
    <property type="match status" value="1"/>
</dbReference>
<dbReference type="PROSITE" id="PS50893">
    <property type="entry name" value="ABC_TRANSPORTER_2"/>
    <property type="match status" value="1"/>
</dbReference>
<dbReference type="PROSITE" id="PS51315">
    <property type="entry name" value="UGPC"/>
    <property type="match status" value="1"/>
</dbReference>
<gene>
    <name evidence="1" type="primary">ugpC</name>
    <name type="ordered locus">RPB_0650</name>
</gene>
<proteinExistence type="inferred from homology"/>